<name>SUHR_RHIME</name>
<evidence type="ECO:0000255" key="1"/>
<evidence type="ECO:0000255" key="2">
    <source>
        <dbReference type="PROSITE-ProRule" id="PRU01161"/>
    </source>
</evidence>
<evidence type="ECO:0000256" key="3">
    <source>
        <dbReference type="SAM" id="MobiDB-lite"/>
    </source>
</evidence>
<evidence type="ECO:0000305" key="4"/>
<proteinExistence type="predicted"/>
<dbReference type="EMBL" id="AL591688">
    <property type="protein sequence ID" value="CAC46675.1"/>
    <property type="molecule type" value="Genomic_DNA"/>
</dbReference>
<dbReference type="EMBL" id="M30934">
    <property type="protein sequence ID" value="AAA88527.1"/>
    <property type="status" value="ALT_FRAME"/>
    <property type="molecule type" value="Genomic_DNA"/>
</dbReference>
<dbReference type="PIR" id="A44504">
    <property type="entry name" value="A44504"/>
</dbReference>
<dbReference type="RefSeq" id="NP_386202.1">
    <property type="nucleotide sequence ID" value="NC_003047.1"/>
</dbReference>
<dbReference type="RefSeq" id="WP_010969699.1">
    <property type="nucleotide sequence ID" value="NC_003047.1"/>
</dbReference>
<dbReference type="EnsemblBacteria" id="CAC46675">
    <property type="protein sequence ID" value="CAC46675"/>
    <property type="gene ID" value="SMc01492"/>
</dbReference>
<dbReference type="KEGG" id="sme:SMc01492"/>
<dbReference type="PATRIC" id="fig|266834.11.peg.3553"/>
<dbReference type="eggNOG" id="COG1752">
    <property type="taxonomic scope" value="Bacteria"/>
</dbReference>
<dbReference type="HOGENOM" id="CLU_026844_0_0_5"/>
<dbReference type="OrthoDB" id="9770965at2"/>
<dbReference type="Proteomes" id="UP000001976">
    <property type="component" value="Chromosome"/>
</dbReference>
<dbReference type="GO" id="GO:0005886">
    <property type="term" value="C:plasma membrane"/>
    <property type="evidence" value="ECO:0007669"/>
    <property type="project" value="UniProtKB-SubCell"/>
</dbReference>
<dbReference type="GO" id="GO:0016787">
    <property type="term" value="F:hydrolase activity"/>
    <property type="evidence" value="ECO:0007669"/>
    <property type="project" value="UniProtKB-KW"/>
</dbReference>
<dbReference type="GO" id="GO:0016042">
    <property type="term" value="P:lipid catabolic process"/>
    <property type="evidence" value="ECO:0007669"/>
    <property type="project" value="UniProtKB-KW"/>
</dbReference>
<dbReference type="Gene3D" id="3.40.1090.10">
    <property type="entry name" value="Cytosolic phospholipase A2 catalytic domain"/>
    <property type="match status" value="2"/>
</dbReference>
<dbReference type="InterPro" id="IPR016035">
    <property type="entry name" value="Acyl_Trfase/lysoPLipase"/>
</dbReference>
<dbReference type="InterPro" id="IPR002641">
    <property type="entry name" value="PNPLA_dom"/>
</dbReference>
<dbReference type="Pfam" id="PF01734">
    <property type="entry name" value="Patatin"/>
    <property type="match status" value="1"/>
</dbReference>
<dbReference type="SUPFAM" id="SSF52151">
    <property type="entry name" value="FabD/lysophospholipase-like"/>
    <property type="match status" value="1"/>
</dbReference>
<dbReference type="PROSITE" id="PS51635">
    <property type="entry name" value="PNPLA"/>
    <property type="match status" value="1"/>
</dbReference>
<reference key="1">
    <citation type="journal article" date="2001" name="Proc. Natl. Acad. Sci. U.S.A.">
        <title>Analysis of the chromosome sequence of the legume symbiont Sinorhizobium meliloti strain 1021.</title>
        <authorList>
            <person name="Capela D."/>
            <person name="Barloy-Hubler F."/>
            <person name="Gouzy J."/>
            <person name="Bothe G."/>
            <person name="Ampe F."/>
            <person name="Batut J."/>
            <person name="Boistard P."/>
            <person name="Becker A."/>
            <person name="Boutry M."/>
            <person name="Cadieu E."/>
            <person name="Dreano S."/>
            <person name="Gloux S."/>
            <person name="Godrie T."/>
            <person name="Goffeau A."/>
            <person name="Kahn D."/>
            <person name="Kiss E."/>
            <person name="Lelaure V."/>
            <person name="Masuy D."/>
            <person name="Pohl T."/>
            <person name="Portetelle D."/>
            <person name="Puehler A."/>
            <person name="Purnelle B."/>
            <person name="Ramsperger U."/>
            <person name="Renard C."/>
            <person name="Thebault P."/>
            <person name="Vandenbol M."/>
            <person name="Weidner S."/>
            <person name="Galibert F."/>
        </authorList>
    </citation>
    <scope>NUCLEOTIDE SEQUENCE [LARGE SCALE GENOMIC DNA]</scope>
    <source>
        <strain>1021</strain>
    </source>
</reference>
<reference key="2">
    <citation type="journal article" date="2001" name="Science">
        <title>The composite genome of the legume symbiont Sinorhizobium meliloti.</title>
        <authorList>
            <person name="Galibert F."/>
            <person name="Finan T.M."/>
            <person name="Long S.R."/>
            <person name="Puehler A."/>
            <person name="Abola P."/>
            <person name="Ampe F."/>
            <person name="Barloy-Hubler F."/>
            <person name="Barnett M.J."/>
            <person name="Becker A."/>
            <person name="Boistard P."/>
            <person name="Bothe G."/>
            <person name="Boutry M."/>
            <person name="Bowser L."/>
            <person name="Buhrmester J."/>
            <person name="Cadieu E."/>
            <person name="Capela D."/>
            <person name="Chain P."/>
            <person name="Cowie A."/>
            <person name="Davis R.W."/>
            <person name="Dreano S."/>
            <person name="Federspiel N.A."/>
            <person name="Fisher R.F."/>
            <person name="Gloux S."/>
            <person name="Godrie T."/>
            <person name="Goffeau A."/>
            <person name="Golding B."/>
            <person name="Gouzy J."/>
            <person name="Gurjal M."/>
            <person name="Hernandez-Lucas I."/>
            <person name="Hong A."/>
            <person name="Huizar L."/>
            <person name="Hyman R.W."/>
            <person name="Jones T."/>
            <person name="Kahn D."/>
            <person name="Kahn M.L."/>
            <person name="Kalman S."/>
            <person name="Keating D.H."/>
            <person name="Kiss E."/>
            <person name="Komp C."/>
            <person name="Lelaure V."/>
            <person name="Masuy D."/>
            <person name="Palm C."/>
            <person name="Peck M.C."/>
            <person name="Pohl T.M."/>
            <person name="Portetelle D."/>
            <person name="Purnelle B."/>
            <person name="Ramsperger U."/>
            <person name="Surzycki R."/>
            <person name="Thebault P."/>
            <person name="Vandenbol M."/>
            <person name="Vorhoelter F.J."/>
            <person name="Weidner S."/>
            <person name="Wells D.H."/>
            <person name="Wong K."/>
            <person name="Yeh K.-C."/>
            <person name="Batut J."/>
        </authorList>
    </citation>
    <scope>NUCLEOTIDE SEQUENCE [LARGE SCALE GENOMIC DNA]</scope>
    <source>
        <strain>1021</strain>
    </source>
</reference>
<reference key="3">
    <citation type="journal article" date="1990" name="J. Bacteriol.">
        <title>Rhizobium meliloti suhR suppresses the phenotype of an Escherichia coli RNA polymerase sigma 32 mutant.</title>
        <authorList>
            <person name="Bent A.F."/>
            <person name="Signer E.R."/>
        </authorList>
    </citation>
    <scope>NUCLEOTIDE SEQUENCE [GENOMIC DNA] OF 1-281</scope>
    <source>
        <strain>1021</strain>
    </source>
</reference>
<sequence length="633" mass="68699">MARTPAKYCDLVMKGGITSGIVYPNAALALARDYRFKNIGGTSAGAIAAAACAAAAVGDRRKQMKAAIAQPEERVGFEGLAKASANLASPGFIKDLLQPAAGAGQAFRLLVTLAGNTGVLRKGVALLGSVVRIAPVETLLLLAALAGLAYAVGGQTGMIAAALPAAICAYLGGVVFAVLRIARVLRRNLMGLCTGTAPDQPARRPRMVLTDWLHETLQALSGKASGQPLTFGDLWTAERYPGEPGSDRAVTLKMITTGISHQEPRSLPFESALFWFRRKEFEALFPKVVVDWMVEKAGEPVTVAGEDYYLLPHGADMPVLVATRMSLSFPLLISAVPLHEPARRESLPGSDGENEAEDTTSDEDEQKTVLDSTEALTTGGKKRRARPAAFRICWFSDGGISSNFPIHLFDRALPRWPTFAINLVYPETSDTGSRPEVFLPENNRQGWQRHYQPIARKSAVHELCAFVFAIVATMQNWRDLLQSRAPGHRERIVHVSLSPQEGGLNLAMSKEVLAAVSKKGTAAGEAFARFSFENHYWIRWRNLASALQRYTIDIAASDAYRPKIPDYEPAYALAHDATSKPPSYRFASKAEREEAARLLEKLIGEGEKWSGEGPDLTKTAPRPLPQLQIAPTY</sequence>
<keyword id="KW-1003">Cell membrane</keyword>
<keyword id="KW-0378">Hydrolase</keyword>
<keyword id="KW-0442">Lipid degradation</keyword>
<keyword id="KW-0443">Lipid metabolism</keyword>
<keyword id="KW-0472">Membrane</keyword>
<keyword id="KW-1185">Reference proteome</keyword>
<keyword id="KW-0812">Transmembrane</keyword>
<keyword id="KW-1133">Transmembrane helix</keyword>
<comment type="function">
    <text>This protein is non-essential for R.meliloti growth, but induces a heat-shock response in temperature-sensitive E.coli K165 by elevating levels of sigma 32 (mechanism unknown).</text>
</comment>
<comment type="subcellular location">
    <subcellularLocation>
        <location>Cell membrane</location>
        <topology>Multi-pass membrane protein</topology>
    </subcellularLocation>
</comment>
<comment type="sequence caution" evidence="4">
    <conflict type="frameshift">
        <sequence resource="EMBL-CDS" id="AAA88527"/>
    </conflict>
</comment>
<accession>P15715</accession>
<feature type="chain" id="PRO_0000072304" description="RpoH suppressor">
    <location>
        <begin position="1"/>
        <end position="633"/>
    </location>
</feature>
<feature type="transmembrane region" description="Helical" evidence="1">
    <location>
        <begin position="38"/>
        <end position="58"/>
    </location>
</feature>
<feature type="transmembrane region" description="Helical" evidence="1">
    <location>
        <begin position="133"/>
        <end position="153"/>
    </location>
</feature>
<feature type="transmembrane region" description="Helical" evidence="1">
    <location>
        <begin position="159"/>
        <end position="179"/>
    </location>
</feature>
<feature type="domain" description="PNPLA" evidence="2">
    <location>
        <begin position="11"/>
        <end position="410"/>
    </location>
</feature>
<feature type="region of interest" description="Disordered" evidence="3">
    <location>
        <begin position="342"/>
        <end position="380"/>
    </location>
</feature>
<feature type="region of interest" description="Disordered" evidence="3">
    <location>
        <begin position="605"/>
        <end position="624"/>
    </location>
</feature>
<feature type="short sequence motif" description="GXSXG" evidence="2">
    <location>
        <begin position="41"/>
        <end position="45"/>
    </location>
</feature>
<feature type="short sequence motif" description="DGA/G" evidence="2">
    <location>
        <begin position="397"/>
        <end position="399"/>
    </location>
</feature>
<feature type="compositionally biased region" description="Acidic residues" evidence="3">
    <location>
        <begin position="352"/>
        <end position="365"/>
    </location>
</feature>
<feature type="active site" description="Nucleophile" evidence="2">
    <location>
        <position position="43"/>
    </location>
</feature>
<feature type="active site" description="Proton acceptor" evidence="2">
    <location>
        <position position="397"/>
    </location>
</feature>
<feature type="sequence conflict" description="In Ref. 3." evidence="4" ref="3">
    <original>A</original>
    <variation>G</variation>
    <location>
        <position position="29"/>
    </location>
</feature>
<gene>
    <name type="primary">suhR</name>
    <name type="ordered locus">R02096</name>
    <name type="ORF">SMc01492</name>
</gene>
<protein>
    <recommendedName>
        <fullName>RpoH suppressor</fullName>
    </recommendedName>
</protein>
<organism>
    <name type="scientific">Rhizobium meliloti (strain 1021)</name>
    <name type="common">Ensifer meliloti</name>
    <name type="synonym">Sinorhizobium meliloti</name>
    <dbReference type="NCBI Taxonomy" id="266834"/>
    <lineage>
        <taxon>Bacteria</taxon>
        <taxon>Pseudomonadati</taxon>
        <taxon>Pseudomonadota</taxon>
        <taxon>Alphaproteobacteria</taxon>
        <taxon>Hyphomicrobiales</taxon>
        <taxon>Rhizobiaceae</taxon>
        <taxon>Sinorhizobium/Ensifer group</taxon>
        <taxon>Sinorhizobium</taxon>
    </lineage>
</organism>